<accession>Q753F4</accession>
<organism>
    <name type="scientific">Eremothecium gossypii (strain ATCC 10895 / CBS 109.51 / FGSC 9923 / NRRL Y-1056)</name>
    <name type="common">Yeast</name>
    <name type="synonym">Ashbya gossypii</name>
    <dbReference type="NCBI Taxonomy" id="284811"/>
    <lineage>
        <taxon>Eukaryota</taxon>
        <taxon>Fungi</taxon>
        <taxon>Dikarya</taxon>
        <taxon>Ascomycota</taxon>
        <taxon>Saccharomycotina</taxon>
        <taxon>Saccharomycetes</taxon>
        <taxon>Saccharomycetales</taxon>
        <taxon>Saccharomycetaceae</taxon>
        <taxon>Eremothecium</taxon>
    </lineage>
</organism>
<reference key="1">
    <citation type="journal article" date="2004" name="Science">
        <title>The Ashbya gossypii genome as a tool for mapping the ancient Saccharomyces cerevisiae genome.</title>
        <authorList>
            <person name="Dietrich F.S."/>
            <person name="Voegeli S."/>
            <person name="Brachat S."/>
            <person name="Lerch A."/>
            <person name="Gates K."/>
            <person name="Steiner S."/>
            <person name="Mohr C."/>
            <person name="Poehlmann R."/>
            <person name="Luedi P."/>
            <person name="Choi S."/>
            <person name="Wing R.A."/>
            <person name="Flavier A."/>
            <person name="Gaffney T.D."/>
            <person name="Philippsen P."/>
        </authorList>
    </citation>
    <scope>NUCLEOTIDE SEQUENCE [LARGE SCALE GENOMIC DNA]</scope>
    <source>
        <strain>ATCC 10895 / CBS 109.51 / FGSC 9923 / NRRL Y-1056</strain>
    </source>
</reference>
<reference key="2">
    <citation type="journal article" date="2013" name="G3 (Bethesda)">
        <title>Genomes of Ashbya fungi isolated from insects reveal four mating-type loci, numerous translocations, lack of transposons, and distinct gene duplications.</title>
        <authorList>
            <person name="Dietrich F.S."/>
            <person name="Voegeli S."/>
            <person name="Kuo S."/>
            <person name="Philippsen P."/>
        </authorList>
    </citation>
    <scope>GENOME REANNOTATION</scope>
    <source>
        <strain>ATCC 10895 / CBS 109.51 / FGSC 9923 / NRRL Y-1056</strain>
    </source>
</reference>
<gene>
    <name type="primary">CYC1</name>
    <name type="ordered locus">AFR360W</name>
</gene>
<feature type="chain" id="PRO_0000108316" description="Cytochrome c">
    <location>
        <begin position="1"/>
        <end position="110"/>
    </location>
</feature>
<feature type="binding site" description="covalent" evidence="2">
    <location>
        <position position="21"/>
    </location>
    <ligand>
        <name>heme c</name>
        <dbReference type="ChEBI" id="CHEBI:61717"/>
    </ligand>
</feature>
<feature type="binding site" description="covalent" evidence="2">
    <location>
        <position position="24"/>
    </location>
    <ligand>
        <name>heme c</name>
        <dbReference type="ChEBI" id="CHEBI:61717"/>
    </ligand>
</feature>
<feature type="binding site" description="axial binding residue" evidence="2">
    <location>
        <position position="25"/>
    </location>
    <ligand>
        <name>heme c</name>
        <dbReference type="ChEBI" id="CHEBI:61717"/>
    </ligand>
    <ligandPart>
        <name>Fe</name>
        <dbReference type="ChEBI" id="CHEBI:18248"/>
    </ligandPart>
</feature>
<feature type="binding site" description="axial binding residue" evidence="2">
    <location>
        <position position="87"/>
    </location>
    <ligand>
        <name>heme c</name>
        <dbReference type="ChEBI" id="CHEBI:61717"/>
    </ligand>
    <ligandPart>
        <name>Fe</name>
        <dbReference type="ChEBI" id="CHEBI:18248"/>
    </ligandPart>
</feature>
<feature type="modified residue" description="N6,N6,N6-trimethyllysine" evidence="1">
    <location>
        <position position="79"/>
    </location>
</feature>
<name>CYC_EREGS</name>
<keyword id="KW-0249">Electron transport</keyword>
<keyword id="KW-0349">Heme</keyword>
<keyword id="KW-0408">Iron</keyword>
<keyword id="KW-0479">Metal-binding</keyword>
<keyword id="KW-0488">Methylation</keyword>
<keyword id="KW-0496">Mitochondrion</keyword>
<keyword id="KW-1185">Reference proteome</keyword>
<keyword id="KW-0679">Respiratory chain</keyword>
<keyword id="KW-0813">Transport</keyword>
<evidence type="ECO:0000250" key="1"/>
<evidence type="ECO:0000255" key="2">
    <source>
        <dbReference type="PROSITE-ProRule" id="PRU00433"/>
    </source>
</evidence>
<evidence type="ECO:0000305" key="3"/>
<protein>
    <recommendedName>
        <fullName>Cytochrome c</fullName>
    </recommendedName>
</protein>
<dbReference type="EMBL" id="AE016819">
    <property type="protein sequence ID" value="AAS53731.1"/>
    <property type="status" value="ALT_INIT"/>
    <property type="molecule type" value="Genomic_DNA"/>
</dbReference>
<dbReference type="RefSeq" id="NP_985907.1">
    <property type="nucleotide sequence ID" value="NM_211262.1"/>
</dbReference>
<dbReference type="SMR" id="Q753F4"/>
<dbReference type="FunCoup" id="Q753F4">
    <property type="interactions" value="608"/>
</dbReference>
<dbReference type="STRING" id="284811.Q753F4"/>
<dbReference type="GeneID" id="4622177"/>
<dbReference type="KEGG" id="ago:AGOS_AFR360W"/>
<dbReference type="eggNOG" id="KOG3453">
    <property type="taxonomic scope" value="Eukaryota"/>
</dbReference>
<dbReference type="InParanoid" id="Q753F4"/>
<dbReference type="OrthoDB" id="449280at2759"/>
<dbReference type="Proteomes" id="UP000000591">
    <property type="component" value="Chromosome VI"/>
</dbReference>
<dbReference type="GO" id="GO:0005758">
    <property type="term" value="C:mitochondrial intermembrane space"/>
    <property type="evidence" value="ECO:0000318"/>
    <property type="project" value="GO_Central"/>
</dbReference>
<dbReference type="GO" id="GO:0009055">
    <property type="term" value="F:electron transfer activity"/>
    <property type="evidence" value="ECO:0000318"/>
    <property type="project" value="GO_Central"/>
</dbReference>
<dbReference type="GO" id="GO:0020037">
    <property type="term" value="F:heme binding"/>
    <property type="evidence" value="ECO:0007669"/>
    <property type="project" value="InterPro"/>
</dbReference>
<dbReference type="GO" id="GO:0046872">
    <property type="term" value="F:metal ion binding"/>
    <property type="evidence" value="ECO:0007669"/>
    <property type="project" value="UniProtKB-KW"/>
</dbReference>
<dbReference type="GO" id="GO:0006123">
    <property type="term" value="P:mitochondrial electron transport, cytochrome c to oxygen"/>
    <property type="evidence" value="ECO:0000318"/>
    <property type="project" value="GO_Central"/>
</dbReference>
<dbReference type="GO" id="GO:0006122">
    <property type="term" value="P:mitochondrial electron transport, ubiquinol to cytochrome c"/>
    <property type="evidence" value="ECO:0000318"/>
    <property type="project" value="GO_Central"/>
</dbReference>
<dbReference type="FunFam" id="1.10.760.10:FF:000001">
    <property type="entry name" value="Cytochrome c iso-1"/>
    <property type="match status" value="1"/>
</dbReference>
<dbReference type="Gene3D" id="1.10.760.10">
    <property type="entry name" value="Cytochrome c-like domain"/>
    <property type="match status" value="1"/>
</dbReference>
<dbReference type="InterPro" id="IPR009056">
    <property type="entry name" value="Cyt_c-like_dom"/>
</dbReference>
<dbReference type="InterPro" id="IPR036909">
    <property type="entry name" value="Cyt_c-like_dom_sf"/>
</dbReference>
<dbReference type="InterPro" id="IPR002327">
    <property type="entry name" value="Cyt_c_1A/1B"/>
</dbReference>
<dbReference type="PANTHER" id="PTHR11961">
    <property type="entry name" value="CYTOCHROME C"/>
    <property type="match status" value="1"/>
</dbReference>
<dbReference type="Pfam" id="PF00034">
    <property type="entry name" value="Cytochrom_C"/>
    <property type="match status" value="1"/>
</dbReference>
<dbReference type="PRINTS" id="PR00604">
    <property type="entry name" value="CYTCHRMECIAB"/>
</dbReference>
<dbReference type="SUPFAM" id="SSF46626">
    <property type="entry name" value="Cytochrome c"/>
    <property type="match status" value="1"/>
</dbReference>
<dbReference type="PROSITE" id="PS51007">
    <property type="entry name" value="CYTC"/>
    <property type="match status" value="1"/>
</dbReference>
<proteinExistence type="inferred from homology"/>
<comment type="function">
    <text evidence="1">Electron carrier protein. The oxidized form of the cytochrome c heme group can accept an electron from the heme group of the cytochrome c1 subunit of cytochrome reductase. Cytochrome c then transfers this electron to the cytochrome oxidase complex, the final protein carrier in the mitochondrial electron-transport chain (By similarity).</text>
</comment>
<comment type="subcellular location">
    <subcellularLocation>
        <location evidence="1">Mitochondrion intermembrane space</location>
    </subcellularLocation>
</comment>
<comment type="PTM">
    <text evidence="1">Binds 1 heme c group covalently per subunit.</text>
</comment>
<comment type="similarity">
    <text evidence="3">Belongs to the cytochrome c family.</text>
</comment>
<comment type="sequence caution" evidence="3">
    <conflict type="erroneous initiation">
        <sequence resource="EMBL-CDS" id="AAS53731"/>
    </conflict>
</comment>
<comment type="online information" name="Protein Spotlight">
    <link uri="https://www.proteinspotlight.org/back_issues/076"/>
    <text>Life shuttle - Issue 76 of November 2006</text>
</comment>
<sequence>MPAPYKPGSEKKGATLFKTRCLQCHTTEKGGPHKVGPNLHGVFSRQSGQVSGYSYTDAMINRNVTWDAQSMSDYLENPKKYIPGTKMAFGGLKKEKDRNDLITYMLKACK</sequence>